<feature type="chain" id="PRO_0000207686" description="Nanos homolog 1">
    <location>
        <begin position="1"/>
        <end position="267"/>
    </location>
</feature>
<feature type="zinc finger region" description="Nanos-type" evidence="3">
    <location>
        <begin position="188"/>
        <end position="242"/>
    </location>
</feature>
<feature type="region of interest" description="Essential for its translational repressor activity" evidence="1">
    <location>
        <begin position="40"/>
        <end position="56"/>
    </location>
</feature>
<feature type="region of interest" description="Disordered" evidence="4">
    <location>
        <begin position="57"/>
        <end position="94"/>
    </location>
</feature>
<feature type="region of interest" description="Disordered" evidence="4">
    <location>
        <begin position="243"/>
        <end position="267"/>
    </location>
</feature>
<feature type="short sequence motif" description="C2HC 1" evidence="3">
    <location>
        <begin position="189"/>
        <end position="216"/>
    </location>
</feature>
<feature type="short sequence motif" description="C2HC 2" evidence="3">
    <location>
        <begin position="224"/>
        <end position="240"/>
    </location>
</feature>
<feature type="compositionally biased region" description="Acidic residues" evidence="4">
    <location>
        <begin position="78"/>
        <end position="90"/>
    </location>
</feature>
<feature type="compositionally biased region" description="Pro residues" evidence="4">
    <location>
        <begin position="244"/>
        <end position="255"/>
    </location>
</feature>
<feature type="compositionally biased region" description="Basic and acidic residues" evidence="4">
    <location>
        <begin position="256"/>
        <end position="267"/>
    </location>
</feature>
<feature type="binding site" evidence="3">
    <location>
        <position position="189"/>
    </location>
    <ligand>
        <name>Zn(2+)</name>
        <dbReference type="ChEBI" id="CHEBI:29105"/>
        <label>1</label>
    </ligand>
</feature>
<feature type="binding site" evidence="3">
    <location>
        <position position="192"/>
    </location>
    <ligand>
        <name>Zn(2+)</name>
        <dbReference type="ChEBI" id="CHEBI:29105"/>
        <label>1</label>
    </ligand>
</feature>
<feature type="binding site" evidence="3">
    <location>
        <position position="205"/>
    </location>
    <ligand>
        <name>Zn(2+)</name>
        <dbReference type="ChEBI" id="CHEBI:29105"/>
        <label>1</label>
    </ligand>
</feature>
<feature type="binding site" evidence="3">
    <location>
        <position position="216"/>
    </location>
    <ligand>
        <name>Zn(2+)</name>
        <dbReference type="ChEBI" id="CHEBI:29105"/>
        <label>1</label>
    </ligand>
</feature>
<feature type="binding site" evidence="3">
    <location>
        <position position="224"/>
    </location>
    <ligand>
        <name>Zn(2+)</name>
        <dbReference type="ChEBI" id="CHEBI:29105"/>
        <label>2</label>
    </ligand>
</feature>
<feature type="binding site" evidence="3">
    <location>
        <position position="227"/>
    </location>
    <ligand>
        <name>Zn(2+)</name>
        <dbReference type="ChEBI" id="CHEBI:29105"/>
        <label>2</label>
    </ligand>
</feature>
<feature type="binding site" evidence="3">
    <location>
        <position position="235"/>
    </location>
    <ligand>
        <name>Zn(2+)</name>
        <dbReference type="ChEBI" id="CHEBI:29105"/>
        <label>2</label>
    </ligand>
</feature>
<feature type="binding site" evidence="3">
    <location>
        <position position="240"/>
    </location>
    <ligand>
        <name>Zn(2+)</name>
        <dbReference type="ChEBI" id="CHEBI:29105"/>
        <label>2</label>
    </ligand>
</feature>
<feature type="sequence conflict" description="In Ref. 3; BAC76003." evidence="6" ref="3">
    <original>P</original>
    <variation>T</variation>
    <location>
        <position position="111"/>
    </location>
</feature>
<protein>
    <recommendedName>
        <fullName>Nanos homolog 1</fullName>
        <shortName>NOS-1</shortName>
    </recommendedName>
</protein>
<proteinExistence type="evidence at transcript level"/>
<accession>Q80WY3</accession>
<accession>Q3UTS9</accession>
<accession>Q8BIJ9</accession>
<reference key="1">
    <citation type="journal article" date="2005" name="Science">
        <title>The transcriptional landscape of the mammalian genome.</title>
        <authorList>
            <person name="Carninci P."/>
            <person name="Kasukawa T."/>
            <person name="Katayama S."/>
            <person name="Gough J."/>
            <person name="Frith M.C."/>
            <person name="Maeda N."/>
            <person name="Oyama R."/>
            <person name="Ravasi T."/>
            <person name="Lenhard B."/>
            <person name="Wells C."/>
            <person name="Kodzius R."/>
            <person name="Shimokawa K."/>
            <person name="Bajic V.B."/>
            <person name="Brenner S.E."/>
            <person name="Batalov S."/>
            <person name="Forrest A.R."/>
            <person name="Zavolan M."/>
            <person name="Davis M.J."/>
            <person name="Wilming L.G."/>
            <person name="Aidinis V."/>
            <person name="Allen J.E."/>
            <person name="Ambesi-Impiombato A."/>
            <person name="Apweiler R."/>
            <person name="Aturaliya R.N."/>
            <person name="Bailey T.L."/>
            <person name="Bansal M."/>
            <person name="Baxter L."/>
            <person name="Beisel K.W."/>
            <person name="Bersano T."/>
            <person name="Bono H."/>
            <person name="Chalk A.M."/>
            <person name="Chiu K.P."/>
            <person name="Choudhary V."/>
            <person name="Christoffels A."/>
            <person name="Clutterbuck D.R."/>
            <person name="Crowe M.L."/>
            <person name="Dalla E."/>
            <person name="Dalrymple B.P."/>
            <person name="de Bono B."/>
            <person name="Della Gatta G."/>
            <person name="di Bernardo D."/>
            <person name="Down T."/>
            <person name="Engstrom P."/>
            <person name="Fagiolini M."/>
            <person name="Faulkner G."/>
            <person name="Fletcher C.F."/>
            <person name="Fukushima T."/>
            <person name="Furuno M."/>
            <person name="Futaki S."/>
            <person name="Gariboldi M."/>
            <person name="Georgii-Hemming P."/>
            <person name="Gingeras T.R."/>
            <person name="Gojobori T."/>
            <person name="Green R.E."/>
            <person name="Gustincich S."/>
            <person name="Harbers M."/>
            <person name="Hayashi Y."/>
            <person name="Hensch T.K."/>
            <person name="Hirokawa N."/>
            <person name="Hill D."/>
            <person name="Huminiecki L."/>
            <person name="Iacono M."/>
            <person name="Ikeo K."/>
            <person name="Iwama A."/>
            <person name="Ishikawa T."/>
            <person name="Jakt M."/>
            <person name="Kanapin A."/>
            <person name="Katoh M."/>
            <person name="Kawasawa Y."/>
            <person name="Kelso J."/>
            <person name="Kitamura H."/>
            <person name="Kitano H."/>
            <person name="Kollias G."/>
            <person name="Krishnan S.P."/>
            <person name="Kruger A."/>
            <person name="Kummerfeld S.K."/>
            <person name="Kurochkin I.V."/>
            <person name="Lareau L.F."/>
            <person name="Lazarevic D."/>
            <person name="Lipovich L."/>
            <person name="Liu J."/>
            <person name="Liuni S."/>
            <person name="McWilliam S."/>
            <person name="Madan Babu M."/>
            <person name="Madera M."/>
            <person name="Marchionni L."/>
            <person name="Matsuda H."/>
            <person name="Matsuzawa S."/>
            <person name="Miki H."/>
            <person name="Mignone F."/>
            <person name="Miyake S."/>
            <person name="Morris K."/>
            <person name="Mottagui-Tabar S."/>
            <person name="Mulder N."/>
            <person name="Nakano N."/>
            <person name="Nakauchi H."/>
            <person name="Ng P."/>
            <person name="Nilsson R."/>
            <person name="Nishiguchi S."/>
            <person name="Nishikawa S."/>
            <person name="Nori F."/>
            <person name="Ohara O."/>
            <person name="Okazaki Y."/>
            <person name="Orlando V."/>
            <person name="Pang K.C."/>
            <person name="Pavan W.J."/>
            <person name="Pavesi G."/>
            <person name="Pesole G."/>
            <person name="Petrovsky N."/>
            <person name="Piazza S."/>
            <person name="Reed J."/>
            <person name="Reid J.F."/>
            <person name="Ring B.Z."/>
            <person name="Ringwald M."/>
            <person name="Rost B."/>
            <person name="Ruan Y."/>
            <person name="Salzberg S.L."/>
            <person name="Sandelin A."/>
            <person name="Schneider C."/>
            <person name="Schoenbach C."/>
            <person name="Sekiguchi K."/>
            <person name="Semple C.A."/>
            <person name="Seno S."/>
            <person name="Sessa L."/>
            <person name="Sheng Y."/>
            <person name="Shibata Y."/>
            <person name="Shimada H."/>
            <person name="Shimada K."/>
            <person name="Silva D."/>
            <person name="Sinclair B."/>
            <person name="Sperling S."/>
            <person name="Stupka E."/>
            <person name="Sugiura K."/>
            <person name="Sultana R."/>
            <person name="Takenaka Y."/>
            <person name="Taki K."/>
            <person name="Tammoja K."/>
            <person name="Tan S.L."/>
            <person name="Tang S."/>
            <person name="Taylor M.S."/>
            <person name="Tegner J."/>
            <person name="Teichmann S.A."/>
            <person name="Ueda H.R."/>
            <person name="van Nimwegen E."/>
            <person name="Verardo R."/>
            <person name="Wei C.L."/>
            <person name="Yagi K."/>
            <person name="Yamanishi H."/>
            <person name="Zabarovsky E."/>
            <person name="Zhu S."/>
            <person name="Zimmer A."/>
            <person name="Hide W."/>
            <person name="Bult C."/>
            <person name="Grimmond S.M."/>
            <person name="Teasdale R.D."/>
            <person name="Liu E.T."/>
            <person name="Brusic V."/>
            <person name="Quackenbush J."/>
            <person name="Wahlestedt C."/>
            <person name="Mattick J.S."/>
            <person name="Hume D.A."/>
            <person name="Kai C."/>
            <person name="Sasaki D."/>
            <person name="Tomaru Y."/>
            <person name="Fukuda S."/>
            <person name="Kanamori-Katayama M."/>
            <person name="Suzuki M."/>
            <person name="Aoki J."/>
            <person name="Arakawa T."/>
            <person name="Iida J."/>
            <person name="Imamura K."/>
            <person name="Itoh M."/>
            <person name="Kato T."/>
            <person name="Kawaji H."/>
            <person name="Kawagashira N."/>
            <person name="Kawashima T."/>
            <person name="Kojima M."/>
            <person name="Kondo S."/>
            <person name="Konno H."/>
            <person name="Nakano K."/>
            <person name="Ninomiya N."/>
            <person name="Nishio T."/>
            <person name="Okada M."/>
            <person name="Plessy C."/>
            <person name="Shibata K."/>
            <person name="Shiraki T."/>
            <person name="Suzuki S."/>
            <person name="Tagami M."/>
            <person name="Waki K."/>
            <person name="Watahiki A."/>
            <person name="Okamura-Oho Y."/>
            <person name="Suzuki H."/>
            <person name="Kawai J."/>
            <person name="Hayashizaki Y."/>
        </authorList>
    </citation>
    <scope>NUCLEOTIDE SEQUENCE [LARGE SCALE MRNA]</scope>
    <source>
        <strain>C57BL/6J</strain>
        <tissue>Cerebellum</tissue>
    </source>
</reference>
<reference key="2">
    <citation type="journal article" date="2004" name="Genome Res.">
        <title>The status, quality, and expansion of the NIH full-length cDNA project: the Mammalian Gene Collection (MGC).</title>
        <authorList>
            <consortium name="The MGC Project Team"/>
        </authorList>
    </citation>
    <scope>NUCLEOTIDE SEQUENCE [LARGE SCALE MRNA]</scope>
    <source>
        <strain>C57BL/6J</strain>
        <tissue>Brain</tissue>
    </source>
</reference>
<reference key="3">
    <citation type="journal article" date="2003" name="Mech. Dev.">
        <title>nanos1: a mouse nanos gene expressed in the central nervous system is dispensable for normal development.</title>
        <authorList>
            <person name="Haraguchi S."/>
            <person name="Tsuda M."/>
            <person name="Kitajima S."/>
            <person name="Sasaoka Y."/>
            <person name="Nomura-Kitabayashid A."/>
            <person name="Kurokawa K."/>
            <person name="Saga Y."/>
        </authorList>
    </citation>
    <scope>NUCLEOTIDE SEQUENCE [MRNA] OF 49-267</scope>
    <scope>FUNCTION</scope>
    <scope>TISSUE SPECIFICITY</scope>
    <scope>DEVELOPMENTAL STAGE</scope>
    <source>
        <tissue>Embryo</tissue>
    </source>
</reference>
<gene>
    <name type="primary">Nanos1</name>
    <name type="synonym">Nos</name>
</gene>
<organism>
    <name type="scientific">Mus musculus</name>
    <name type="common">Mouse</name>
    <dbReference type="NCBI Taxonomy" id="10090"/>
    <lineage>
        <taxon>Eukaryota</taxon>
        <taxon>Metazoa</taxon>
        <taxon>Chordata</taxon>
        <taxon>Craniata</taxon>
        <taxon>Vertebrata</taxon>
        <taxon>Euteleostomi</taxon>
        <taxon>Mammalia</taxon>
        <taxon>Eutheria</taxon>
        <taxon>Euarchontoglires</taxon>
        <taxon>Glires</taxon>
        <taxon>Rodentia</taxon>
        <taxon>Myomorpha</taxon>
        <taxon>Muroidea</taxon>
        <taxon>Muridae</taxon>
        <taxon>Murinae</taxon>
        <taxon>Mus</taxon>
        <taxon>Mus</taxon>
    </lineage>
</organism>
<comment type="function">
    <text evidence="1 5">May act as a translational repressor which regulates translation of specific mRNAs by forming a complex with PUM2 that associates with the 3'-UTR of mRNA targets. Capable of interfering with the proadhesive and anti-invasive functions of E-cadherin. Up-regulates the production of MMP14 to promote tumor cell invasion (By similarity). Not essential for normal development.</text>
</comment>
<comment type="subunit">
    <text evidence="1">Interacts with PUM2, SNAPIN and CTNNB1. Interacts (via N-terminal region) with CTNND1. Interacts with DDX20 (via N-terminal region) (By similarity).</text>
</comment>
<comment type="subcellular location">
    <subcellularLocation>
        <location evidence="2">Cytoplasm</location>
        <location evidence="2">Perinuclear region</location>
    </subcellularLocation>
    <subcellularLocation>
        <location evidence="2">Cytoplasm</location>
    </subcellularLocation>
    <text evidence="2">Colocalizes with SNAPIN and PUM2 in the perinuclear region of germ cells.</text>
</comment>
<comment type="tissue specificity">
    <text evidence="5">Expressed in the oocyte. Transiently expressed in eight-cell embryos. At 12.5 dpc, it is re-expressed in the central nervous system and the expression continues in the adult brain, in which the hippocampal formation is the predominant region. Expressed in the seminiferous tubules of mature testis, but not in the primordial germ cells.</text>
</comment>
<comment type="developmental stage">
    <text evidence="5">Expressed both maternally and zygotically.</text>
</comment>
<comment type="domain">
    <text evidence="1">The N-terminal region and C-terminal zinc-finger RNA-binding domain are both necessary for interaction with SNAPIN.</text>
</comment>
<comment type="domain">
    <text evidence="3">The Nanos-type zinc finger is composed of two C2HC motifs, each motif binding one molecule of zinc. It is essential for the translation repression activity of the protein.</text>
</comment>
<comment type="similarity">
    <text evidence="3">Belongs to the nanos family.</text>
</comment>
<comment type="sequence caution" evidence="6">
    <conflict type="erroneous initiation">
        <sequence resource="EMBL-CDS" id="BAC76003"/>
    </conflict>
    <text>Truncated N-terminus.</text>
</comment>
<evidence type="ECO:0000250" key="1"/>
<evidence type="ECO:0000250" key="2">
    <source>
        <dbReference type="UniProtKB" id="Q8WY41"/>
    </source>
</evidence>
<evidence type="ECO:0000255" key="3">
    <source>
        <dbReference type="PROSITE-ProRule" id="PRU00855"/>
    </source>
</evidence>
<evidence type="ECO:0000256" key="4">
    <source>
        <dbReference type="SAM" id="MobiDB-lite"/>
    </source>
</evidence>
<evidence type="ECO:0000269" key="5">
    <source>
    </source>
</evidence>
<evidence type="ECO:0000305" key="6"/>
<name>NANO1_MOUSE</name>
<keyword id="KW-0963">Cytoplasm</keyword>
<keyword id="KW-0479">Metal-binding</keyword>
<keyword id="KW-1185">Reference proteome</keyword>
<keyword id="KW-0678">Repressor</keyword>
<keyword id="KW-0694">RNA-binding</keyword>
<keyword id="KW-0810">Translation regulation</keyword>
<keyword id="KW-0862">Zinc</keyword>
<keyword id="KW-0863">Zinc-finger</keyword>
<dbReference type="EMBL" id="AK139148">
    <property type="protein sequence ID" value="BAE23901.1"/>
    <property type="molecule type" value="mRNA"/>
</dbReference>
<dbReference type="EMBL" id="BC056473">
    <property type="protein sequence ID" value="AAH56473.2"/>
    <property type="molecule type" value="mRNA"/>
</dbReference>
<dbReference type="EMBL" id="BC085512">
    <property type="protein sequence ID" value="AAH85512.1"/>
    <property type="molecule type" value="mRNA"/>
</dbReference>
<dbReference type="EMBL" id="CD350545">
    <property type="status" value="NOT_ANNOTATED_CDS"/>
    <property type="molecule type" value="mRNA"/>
</dbReference>
<dbReference type="EMBL" id="AB095029">
    <property type="protein sequence ID" value="BAC76003.1"/>
    <property type="status" value="ALT_INIT"/>
    <property type="molecule type" value="mRNA"/>
</dbReference>
<dbReference type="CCDS" id="CCDS29941.1"/>
<dbReference type="RefSeq" id="NP_848508.2">
    <property type="nucleotide sequence ID" value="NM_178421.3"/>
</dbReference>
<dbReference type="SMR" id="Q80WY3"/>
<dbReference type="FunCoup" id="Q80WY3">
    <property type="interactions" value="415"/>
</dbReference>
<dbReference type="STRING" id="10090.ENSMUSP00000096874"/>
<dbReference type="GlyGen" id="Q80WY3">
    <property type="glycosylation" value="3 sites"/>
</dbReference>
<dbReference type="iPTMnet" id="Q80WY3"/>
<dbReference type="PhosphoSitePlus" id="Q80WY3"/>
<dbReference type="PaxDb" id="10090-ENSMUSP00000096874"/>
<dbReference type="ProteomicsDB" id="287435"/>
<dbReference type="Antibodypedia" id="32079">
    <property type="antibodies" value="298 antibodies from 32 providers"/>
</dbReference>
<dbReference type="DNASU" id="332397"/>
<dbReference type="Ensembl" id="ENSMUST00000088237.6">
    <property type="protein sequence ID" value="ENSMUSP00000096874.3"/>
    <property type="gene ID" value="ENSMUSG00000072437.5"/>
</dbReference>
<dbReference type="GeneID" id="332397"/>
<dbReference type="KEGG" id="mmu:332397"/>
<dbReference type="UCSC" id="uc008ibw.1">
    <property type="organism name" value="mouse"/>
</dbReference>
<dbReference type="AGR" id="MGI:2669254"/>
<dbReference type="CTD" id="340719"/>
<dbReference type="MGI" id="MGI:2669254">
    <property type="gene designation" value="Nanos1"/>
</dbReference>
<dbReference type="VEuPathDB" id="HostDB:ENSMUSG00000072437"/>
<dbReference type="eggNOG" id="KOG4602">
    <property type="taxonomic scope" value="Eukaryota"/>
</dbReference>
<dbReference type="GeneTree" id="ENSGT00950000183135"/>
<dbReference type="HOGENOM" id="CLU_094055_0_0_1"/>
<dbReference type="InParanoid" id="Q80WY3"/>
<dbReference type="OMA" id="CCSPHGG"/>
<dbReference type="OrthoDB" id="10010129at2759"/>
<dbReference type="PhylomeDB" id="Q80WY3"/>
<dbReference type="TreeFam" id="TF326882"/>
<dbReference type="BioGRID-ORCS" id="332397">
    <property type="hits" value="1 hit in 79 CRISPR screens"/>
</dbReference>
<dbReference type="ChiTaRS" id="Nanos1">
    <property type="organism name" value="mouse"/>
</dbReference>
<dbReference type="PRO" id="PR:Q80WY3"/>
<dbReference type="Proteomes" id="UP000000589">
    <property type="component" value="Chromosome 19"/>
</dbReference>
<dbReference type="RNAct" id="Q80WY3">
    <property type="molecule type" value="protein"/>
</dbReference>
<dbReference type="Bgee" id="ENSMUSG00000072437">
    <property type="expression patterns" value="Expressed in rostral migratory stream and 150 other cell types or tissues"/>
</dbReference>
<dbReference type="GO" id="GO:0005737">
    <property type="term" value="C:cytoplasm"/>
    <property type="evidence" value="ECO:0000266"/>
    <property type="project" value="MGI"/>
</dbReference>
<dbReference type="GO" id="GO:0048471">
    <property type="term" value="C:perinuclear region of cytoplasm"/>
    <property type="evidence" value="ECO:0000250"/>
    <property type="project" value="UniProtKB"/>
</dbReference>
<dbReference type="GO" id="GO:0008047">
    <property type="term" value="F:enzyme activator activity"/>
    <property type="evidence" value="ECO:0007669"/>
    <property type="project" value="Ensembl"/>
</dbReference>
<dbReference type="GO" id="GO:0003723">
    <property type="term" value="F:RNA binding"/>
    <property type="evidence" value="ECO:0007669"/>
    <property type="project" value="UniProtKB-KW"/>
</dbReference>
<dbReference type="GO" id="GO:0030371">
    <property type="term" value="F:translation repressor activity"/>
    <property type="evidence" value="ECO:0000250"/>
    <property type="project" value="UniProtKB"/>
</dbReference>
<dbReference type="GO" id="GO:0008270">
    <property type="term" value="F:zinc ion binding"/>
    <property type="evidence" value="ECO:0007669"/>
    <property type="project" value="UniProtKB-KW"/>
</dbReference>
<dbReference type="GO" id="GO:0016477">
    <property type="term" value="P:cell migration"/>
    <property type="evidence" value="ECO:0000250"/>
    <property type="project" value="UniProtKB"/>
</dbReference>
<dbReference type="GO" id="GO:0098749">
    <property type="term" value="P:cerebellar neuron development"/>
    <property type="evidence" value="ECO:0000315"/>
    <property type="project" value="MGI"/>
</dbReference>
<dbReference type="GO" id="GO:0010631">
    <property type="term" value="P:epithelial cell migration"/>
    <property type="evidence" value="ECO:0000250"/>
    <property type="project" value="UniProtKB"/>
</dbReference>
<dbReference type="GO" id="GO:0061157">
    <property type="term" value="P:mRNA destabilization"/>
    <property type="evidence" value="ECO:0007669"/>
    <property type="project" value="Ensembl"/>
</dbReference>
<dbReference type="GO" id="GO:0010608">
    <property type="term" value="P:post-transcriptional regulation of gene expression"/>
    <property type="evidence" value="ECO:0000315"/>
    <property type="project" value="MGI"/>
</dbReference>
<dbReference type="GO" id="GO:0001558">
    <property type="term" value="P:regulation of cell growth"/>
    <property type="evidence" value="ECO:0000316"/>
    <property type="project" value="MGI"/>
</dbReference>
<dbReference type="GO" id="GO:0001894">
    <property type="term" value="P:tissue homeostasis"/>
    <property type="evidence" value="ECO:0000316"/>
    <property type="project" value="MGI"/>
</dbReference>
<dbReference type="FunFam" id="4.10.60.30:FF:000001">
    <property type="entry name" value="nanos homolog 3"/>
    <property type="match status" value="1"/>
</dbReference>
<dbReference type="Gene3D" id="4.10.60.30">
    <property type="entry name" value="Nanos, RNA-binding domain"/>
    <property type="match status" value="1"/>
</dbReference>
<dbReference type="InterPro" id="IPR008705">
    <property type="entry name" value="Nanos/Xcar2"/>
</dbReference>
<dbReference type="InterPro" id="IPR038129">
    <property type="entry name" value="Nanos_sf"/>
</dbReference>
<dbReference type="InterPro" id="IPR024161">
    <property type="entry name" value="Znf_nanos-typ"/>
</dbReference>
<dbReference type="PANTHER" id="PTHR12887">
    <property type="entry name" value="NANOS PROTEIN"/>
    <property type="match status" value="1"/>
</dbReference>
<dbReference type="Pfam" id="PF05741">
    <property type="entry name" value="zf-nanos"/>
    <property type="match status" value="1"/>
</dbReference>
<dbReference type="PROSITE" id="PS51522">
    <property type="entry name" value="ZF_NANOS"/>
    <property type="match status" value="1"/>
</dbReference>
<sequence>MEAFPWAPRSPRRARAPAPMALVPSARYVSASGPVHPQPFSSWNDYLGLATLITRASDRGSPHEGPGPTAAGPTMGPPEDDEDDDGEEPEAGGRYLGGALELRALELCAGPAEPGLLEERFAELNPFAGRAAAVLLGCAPTASTTAAAASTAEVTPREEPSPAWAAEPRLHAASGATAARLLKPELQVCVFCRNNKEAVALYTTHILKGPDGRVLCPVLRRYTCPLCGASGDNAHTIKYCPLSKVPPPTVRPPPRSNRDSLPSKKLR</sequence>